<name>CDRS_HALSA</name>
<organism>
    <name type="scientific">Halobacterium salinarum (strain ATCC 700922 / JCM 11081 / NRC-1)</name>
    <name type="common">Halobacterium halobium</name>
    <dbReference type="NCBI Taxonomy" id="64091"/>
    <lineage>
        <taxon>Archaea</taxon>
        <taxon>Methanobacteriati</taxon>
        <taxon>Methanobacteriota</taxon>
        <taxon>Stenosarchaea group</taxon>
        <taxon>Halobacteria</taxon>
        <taxon>Halobacteriales</taxon>
        <taxon>Halobacteriaceae</taxon>
        <taxon>Halobacterium</taxon>
        <taxon>Halobacterium salinarum NRC-34001</taxon>
    </lineage>
</organism>
<accession>Q9HSJ9</accession>
<feature type="chain" id="PRO_0000461315" description="Transcriptional regulator CdrS">
    <location>
        <begin position="1"/>
        <end position="55"/>
    </location>
</feature>
<comment type="function">
    <text evidence="1">Transcriptional regulator which plays a central role in the regulation of cell division (PubMed:32788376). Activates the expression of the gene encoding the cell division protein FtsZ2, and of other genes encoding proteins predicted to function in critical aspects of cell division (PubMed:32788376). Required for normal cell division but not for cell elongation (PubMed:32788376). May act during the transition from stasis to growth (PubMed:32788376). The CdrSL-FtsZ2 transcriptional network might coordinate cell division timing with cell growth (PubMed:32788376).</text>
</comment>
<comment type="subcellular location">
    <subcellularLocation>
        <location evidence="3">Cytoplasm</location>
    </subcellularLocation>
</comment>
<comment type="induction">
    <text evidence="1">Part of the cdrS-ftsZ2 operon (PubMed:32788376). Transcriptionally regulated by CdrL (PubMed:32788376).</text>
</comment>
<comment type="disruption phenotype">
    <text evidence="1">Deletion of the gene does not affect the growth rate but causes drastic increase in cell size together with morphology defects (PubMed:32788376). Division is strongly impaired (PubMed:32788376). However, a small subset of mutants are still able to divide (PubMed:32788376). The deletion mutant is insensitive to the cell cycle inhibitor aphidicolin (PubMed:32788376).</text>
</comment>
<comment type="similarity">
    <text evidence="3">Belongs to the CdrS family.</text>
</comment>
<keyword id="KW-0010">Activator</keyword>
<keyword id="KW-0131">Cell cycle</keyword>
<keyword id="KW-0132">Cell division</keyword>
<keyword id="KW-0963">Cytoplasm</keyword>
<keyword id="KW-0238">DNA-binding</keyword>
<keyword id="KW-1185">Reference proteome</keyword>
<keyword id="KW-0804">Transcription</keyword>
<keyword id="KW-0805">Transcription regulation</keyword>
<dbReference type="EMBL" id="AE004437">
    <property type="protein sequence ID" value="AAG18805.1"/>
    <property type="molecule type" value="Genomic_DNA"/>
</dbReference>
<dbReference type="EMBL" id="BK010829">
    <property type="protein sequence ID" value="DAC77492.1"/>
    <property type="molecule type" value="Genomic_DNA"/>
</dbReference>
<dbReference type="PIR" id="A84180">
    <property type="entry name" value="A84180"/>
</dbReference>
<dbReference type="RefSeq" id="WP_010902100.1">
    <property type="nucleotide sequence ID" value="NC_002607.1"/>
</dbReference>
<dbReference type="SMR" id="Q9HSJ9"/>
<dbReference type="STRING" id="64091.VNG_0194H"/>
<dbReference type="PaxDb" id="64091-VNG_0194H"/>
<dbReference type="KEGG" id="hal:VNG_0194H"/>
<dbReference type="PATRIC" id="fig|64091.14.peg.142"/>
<dbReference type="HOGENOM" id="CLU_197235_1_0_2"/>
<dbReference type="OrthoDB" id="56938at2157"/>
<dbReference type="Proteomes" id="UP000000554">
    <property type="component" value="Chromosome"/>
</dbReference>
<dbReference type="GO" id="GO:0005737">
    <property type="term" value="C:cytoplasm"/>
    <property type="evidence" value="ECO:0007669"/>
    <property type="project" value="UniProtKB-SubCell"/>
</dbReference>
<dbReference type="GO" id="GO:0003677">
    <property type="term" value="F:DNA binding"/>
    <property type="evidence" value="ECO:0007669"/>
    <property type="project" value="UniProtKB-KW"/>
</dbReference>
<dbReference type="GO" id="GO:0051301">
    <property type="term" value="P:cell division"/>
    <property type="evidence" value="ECO:0007669"/>
    <property type="project" value="UniProtKB-KW"/>
</dbReference>
<dbReference type="GO" id="GO:0006355">
    <property type="term" value="P:regulation of DNA-templated transcription"/>
    <property type="evidence" value="ECO:0007669"/>
    <property type="project" value="InterPro"/>
</dbReference>
<dbReference type="CDD" id="cd22231">
    <property type="entry name" value="RHH_NikR_HicB-like"/>
    <property type="match status" value="1"/>
</dbReference>
<dbReference type="Gene3D" id="1.10.1220.10">
    <property type="entry name" value="Met repressor-like"/>
    <property type="match status" value="1"/>
</dbReference>
<dbReference type="InterPro" id="IPR013321">
    <property type="entry name" value="Arc_rbn_hlx_hlx"/>
</dbReference>
<dbReference type="InterPro" id="IPR002145">
    <property type="entry name" value="CopG"/>
</dbReference>
<dbReference type="InterPro" id="IPR010985">
    <property type="entry name" value="Ribbon_hlx_hlx"/>
</dbReference>
<dbReference type="PANTHER" id="PTHR36215">
    <property type="entry name" value="BLL4998 PROTEIN"/>
    <property type="match status" value="1"/>
</dbReference>
<dbReference type="PANTHER" id="PTHR36215:SF1">
    <property type="entry name" value="BLL4998 PROTEIN"/>
    <property type="match status" value="1"/>
</dbReference>
<dbReference type="Pfam" id="PF01402">
    <property type="entry name" value="RHH_1"/>
    <property type="match status" value="1"/>
</dbReference>
<dbReference type="SUPFAM" id="SSF47598">
    <property type="entry name" value="Ribbon-helix-helix"/>
    <property type="match status" value="1"/>
</dbReference>
<gene>
    <name evidence="2" type="primary">cdrS</name>
    <name evidence="4" type="ordered locus">VNG_0194H</name>
</gene>
<reference evidence="4" key="1">
    <citation type="journal article" date="2000" name="Proc. Natl. Acad. Sci. U.S.A.">
        <title>Genome sequence of Halobacterium species NRC-1.</title>
        <authorList>
            <person name="Ng W.V."/>
            <person name="Kennedy S.P."/>
            <person name="Mahairas G.G."/>
            <person name="Berquist B."/>
            <person name="Pan M."/>
            <person name="Shukla H.D."/>
            <person name="Lasky S.R."/>
            <person name="Baliga N.S."/>
            <person name="Thorsson V."/>
            <person name="Sbrogna J."/>
            <person name="Swartzell S."/>
            <person name="Weir D."/>
            <person name="Hall J."/>
            <person name="Dahl T.A."/>
            <person name="Welti R."/>
            <person name="Goo Y.A."/>
            <person name="Leithauser B."/>
            <person name="Keller K."/>
            <person name="Cruz R."/>
            <person name="Danson M.J."/>
            <person name="Hough D.W."/>
            <person name="Maddocks D.G."/>
            <person name="Jablonski P.E."/>
            <person name="Krebs M.P."/>
            <person name="Angevine C.M."/>
            <person name="Dale H."/>
            <person name="Isenbarger T.A."/>
            <person name="Peck R.F."/>
            <person name="Pohlschroder M."/>
            <person name="Spudich J.L."/>
            <person name="Jung K.-H."/>
            <person name="Alam M."/>
            <person name="Freitas T."/>
            <person name="Hou S."/>
            <person name="Daniels C.J."/>
            <person name="Dennis P.P."/>
            <person name="Omer A.D."/>
            <person name="Ebhardt H."/>
            <person name="Lowe T.M."/>
            <person name="Liang P."/>
            <person name="Riley M."/>
            <person name="Hood L."/>
            <person name="DasSarma S."/>
        </authorList>
    </citation>
    <scope>NUCLEOTIDE SEQUENCE [LARGE SCALE GENOMIC DNA]</scope>
    <source>
        <strain>ATCC 700922 / JCM 11081 / NRC-1</strain>
    </source>
</reference>
<reference evidence="5" key="2">
    <citation type="journal article" date="2019" name="Microbiol. Resour. Announc.">
        <title>The Genome Sequence of the Halobacterium salinarum Type Strain Is Closely Related to That of Laboratory Strains NRC-1 and R1.</title>
        <authorList>
            <person name="Pfeiffer F."/>
            <person name="Marchfelder A."/>
            <person name="Habermann B."/>
            <person name="Dyall-Smith M.L."/>
        </authorList>
    </citation>
    <scope>GENOME REANNOTATION</scope>
    <source>
        <strain>ATCC 700922 / JCM 11081 / NRC-1</strain>
    </source>
</reference>
<reference key="3">
    <citation type="journal article" date="2020" name="MBio">
        <title>The Ribbon-Helix-Helix Domain Protein CdrS Regulates the Tubulin Homolog ftsZ2 To Control Cell Division in Archaea.</title>
        <authorList>
            <person name="Darnell C.L."/>
            <person name="Zheng J."/>
            <person name="Wilson S."/>
            <person name="Bertoli R.M."/>
            <person name="Bisson-Filho A.W."/>
            <person name="Garner E.C."/>
            <person name="Schmid A.K."/>
        </authorList>
    </citation>
    <scope>FUNCTION</scope>
    <scope>INDUCTION</scope>
    <scope>DISRUPTION PHENOTYPE</scope>
    <source>
        <strain>ATCC 700922 / JCM 11081 / NRC-1</strain>
    </source>
</reference>
<evidence type="ECO:0000269" key="1">
    <source>
    </source>
</evidence>
<evidence type="ECO:0000303" key="2">
    <source>
    </source>
</evidence>
<evidence type="ECO:0000305" key="3"/>
<evidence type="ECO:0000312" key="4">
    <source>
        <dbReference type="EMBL" id="AAG18805.1"/>
    </source>
</evidence>
<evidence type="ECO:0000312" key="5">
    <source>
        <dbReference type="EMBL" id="DAC77492.1"/>
    </source>
</evidence>
<proteinExistence type="evidence at transcript level"/>
<sequence>MERVTLRIPEQQIDEVEQMVERGKFPNRSEAIRSAVREMIDEHTDKTGAKSWAKV</sequence>
<protein>
    <recommendedName>
        <fullName evidence="3">Transcriptional regulator CdrS</fullName>
    </recommendedName>
    <alternativeName>
        <fullName evidence="2">Cell division regulator short</fullName>
    </alternativeName>
    <alternativeName>
        <fullName evidence="2">Ribbon-helix-helix domain protein CdrS</fullName>
    </alternativeName>
</protein>